<protein>
    <recommendedName>
        <fullName evidence="1">7-cyano-7-deazaguanine synthase</fullName>
        <ecNumber evidence="1">6.3.4.20</ecNumber>
    </recommendedName>
    <alternativeName>
        <fullName evidence="1">7-cyano-7-carbaguanine synthase</fullName>
    </alternativeName>
    <alternativeName>
        <fullName evidence="1">PreQ(0) synthase</fullName>
    </alternativeName>
    <alternativeName>
        <fullName evidence="1">Queuosine biosynthesis protein QueC</fullName>
    </alternativeName>
</protein>
<comment type="function">
    <text evidence="1">Catalyzes the ATP-dependent conversion of 7-carboxy-7-deazaguanine (CDG) to 7-cyano-7-deazaguanine (preQ(0)).</text>
</comment>
<comment type="catalytic activity">
    <reaction evidence="1">
        <text>7-carboxy-7-deazaguanine + NH4(+) + ATP = 7-cyano-7-deazaguanine + ADP + phosphate + H2O + H(+)</text>
        <dbReference type="Rhea" id="RHEA:27982"/>
        <dbReference type="ChEBI" id="CHEBI:15377"/>
        <dbReference type="ChEBI" id="CHEBI:15378"/>
        <dbReference type="ChEBI" id="CHEBI:28938"/>
        <dbReference type="ChEBI" id="CHEBI:30616"/>
        <dbReference type="ChEBI" id="CHEBI:43474"/>
        <dbReference type="ChEBI" id="CHEBI:45075"/>
        <dbReference type="ChEBI" id="CHEBI:61036"/>
        <dbReference type="ChEBI" id="CHEBI:456216"/>
        <dbReference type="EC" id="6.3.4.20"/>
    </reaction>
</comment>
<comment type="cofactor">
    <cofactor evidence="1">
        <name>Zn(2+)</name>
        <dbReference type="ChEBI" id="CHEBI:29105"/>
    </cofactor>
    <text evidence="1">Binds 1 zinc ion per subunit.</text>
</comment>
<comment type="pathway">
    <text evidence="1">Purine metabolism; 7-cyano-7-deazaguanine biosynthesis.</text>
</comment>
<comment type="subunit">
    <text evidence="1">Homodimer.</text>
</comment>
<comment type="similarity">
    <text evidence="1">Belongs to the QueC family.</text>
</comment>
<organism>
    <name type="scientific">Streptococcus mutans serotype c (strain ATCC 700610 / UA159)</name>
    <dbReference type="NCBI Taxonomy" id="210007"/>
    <lineage>
        <taxon>Bacteria</taxon>
        <taxon>Bacillati</taxon>
        <taxon>Bacillota</taxon>
        <taxon>Bacilli</taxon>
        <taxon>Lactobacillales</taxon>
        <taxon>Streptococcaceae</taxon>
        <taxon>Streptococcus</taxon>
    </lineage>
</organism>
<proteinExistence type="inferred from homology"/>
<name>QUEC_STRMU</name>
<evidence type="ECO:0000255" key="1">
    <source>
        <dbReference type="HAMAP-Rule" id="MF_01633"/>
    </source>
</evidence>
<accession>Q8DUK7</accession>
<keyword id="KW-0067">ATP-binding</keyword>
<keyword id="KW-0436">Ligase</keyword>
<keyword id="KW-0479">Metal-binding</keyword>
<keyword id="KW-0547">Nucleotide-binding</keyword>
<keyword id="KW-0671">Queuosine biosynthesis</keyword>
<keyword id="KW-1185">Reference proteome</keyword>
<keyword id="KW-0862">Zinc</keyword>
<dbReference type="EC" id="6.3.4.20" evidence="1"/>
<dbReference type="EMBL" id="AE014133">
    <property type="protein sequence ID" value="AAN58626.1"/>
    <property type="molecule type" value="Genomic_DNA"/>
</dbReference>
<dbReference type="RefSeq" id="NP_721320.1">
    <property type="nucleotide sequence ID" value="NC_004350.2"/>
</dbReference>
<dbReference type="RefSeq" id="WP_002263291.1">
    <property type="nucleotide sequence ID" value="NC_004350.2"/>
</dbReference>
<dbReference type="SMR" id="Q8DUK7"/>
<dbReference type="STRING" id="210007.SMU_919c"/>
<dbReference type="GeneID" id="93859562"/>
<dbReference type="KEGG" id="smu:SMU_919c"/>
<dbReference type="PATRIC" id="fig|210007.7.peg.819"/>
<dbReference type="eggNOG" id="COG0603">
    <property type="taxonomic scope" value="Bacteria"/>
</dbReference>
<dbReference type="HOGENOM" id="CLU_081854_0_0_9"/>
<dbReference type="OrthoDB" id="9789567at2"/>
<dbReference type="PhylomeDB" id="Q8DUK7"/>
<dbReference type="UniPathway" id="UPA00391"/>
<dbReference type="Proteomes" id="UP000002512">
    <property type="component" value="Chromosome"/>
</dbReference>
<dbReference type="GO" id="GO:0005524">
    <property type="term" value="F:ATP binding"/>
    <property type="evidence" value="ECO:0007669"/>
    <property type="project" value="UniProtKB-UniRule"/>
</dbReference>
<dbReference type="GO" id="GO:0016879">
    <property type="term" value="F:ligase activity, forming carbon-nitrogen bonds"/>
    <property type="evidence" value="ECO:0007669"/>
    <property type="project" value="UniProtKB-UniRule"/>
</dbReference>
<dbReference type="GO" id="GO:0008270">
    <property type="term" value="F:zinc ion binding"/>
    <property type="evidence" value="ECO:0007669"/>
    <property type="project" value="UniProtKB-UniRule"/>
</dbReference>
<dbReference type="GO" id="GO:0008616">
    <property type="term" value="P:queuosine biosynthetic process"/>
    <property type="evidence" value="ECO:0007669"/>
    <property type="project" value="UniProtKB-UniRule"/>
</dbReference>
<dbReference type="CDD" id="cd01995">
    <property type="entry name" value="QueC-like"/>
    <property type="match status" value="1"/>
</dbReference>
<dbReference type="FunFam" id="3.40.50.620:FF:000017">
    <property type="entry name" value="7-cyano-7-deazaguanine synthase"/>
    <property type="match status" value="1"/>
</dbReference>
<dbReference type="Gene3D" id="3.40.50.620">
    <property type="entry name" value="HUPs"/>
    <property type="match status" value="1"/>
</dbReference>
<dbReference type="HAMAP" id="MF_01633">
    <property type="entry name" value="QueC"/>
    <property type="match status" value="1"/>
</dbReference>
<dbReference type="InterPro" id="IPR018317">
    <property type="entry name" value="QueC"/>
</dbReference>
<dbReference type="InterPro" id="IPR014729">
    <property type="entry name" value="Rossmann-like_a/b/a_fold"/>
</dbReference>
<dbReference type="NCBIfam" id="TIGR00364">
    <property type="entry name" value="7-cyano-7-deazaguanine synthase QueC"/>
    <property type="match status" value="1"/>
</dbReference>
<dbReference type="PANTHER" id="PTHR42914">
    <property type="entry name" value="7-CYANO-7-DEAZAGUANINE SYNTHASE"/>
    <property type="match status" value="1"/>
</dbReference>
<dbReference type="PANTHER" id="PTHR42914:SF1">
    <property type="entry name" value="7-CYANO-7-DEAZAGUANINE SYNTHASE"/>
    <property type="match status" value="1"/>
</dbReference>
<dbReference type="Pfam" id="PF06508">
    <property type="entry name" value="QueC"/>
    <property type="match status" value="1"/>
</dbReference>
<dbReference type="PIRSF" id="PIRSF006293">
    <property type="entry name" value="ExsB"/>
    <property type="match status" value="1"/>
</dbReference>
<dbReference type="SUPFAM" id="SSF52402">
    <property type="entry name" value="Adenine nucleotide alpha hydrolases-like"/>
    <property type="match status" value="1"/>
</dbReference>
<sequence length="217" mass="24545">MKRQSALVVFSGGQDSTTCLFWAMKHYEYVETVTFSYGQRHSQELEVAKEIAAEQGVKHHILDMSLLGQITENALTSDIAIETKDGEVPNTFVDGRNHLFLSFAAVLAKQRKIRDIVTGVCQTDFSGYPDCRDVFVKSLNVTLNLAMDYEFVIQTPLMWLDKAETWELADQLGKFDYVRQKTLTCYNGIRGTGCRQCPACHLRQAGLEKYLSQKGKN</sequence>
<feature type="chain" id="PRO_0000246941" description="7-cyano-7-deazaguanine synthase">
    <location>
        <begin position="1"/>
        <end position="217"/>
    </location>
</feature>
<feature type="binding site" evidence="1">
    <location>
        <begin position="10"/>
        <end position="20"/>
    </location>
    <ligand>
        <name>ATP</name>
        <dbReference type="ChEBI" id="CHEBI:30616"/>
    </ligand>
</feature>
<feature type="binding site" evidence="1">
    <location>
        <position position="185"/>
    </location>
    <ligand>
        <name>Zn(2+)</name>
        <dbReference type="ChEBI" id="CHEBI:29105"/>
    </ligand>
</feature>
<feature type="binding site" evidence="1">
    <location>
        <position position="194"/>
    </location>
    <ligand>
        <name>Zn(2+)</name>
        <dbReference type="ChEBI" id="CHEBI:29105"/>
    </ligand>
</feature>
<feature type="binding site" evidence="1">
    <location>
        <position position="197"/>
    </location>
    <ligand>
        <name>Zn(2+)</name>
        <dbReference type="ChEBI" id="CHEBI:29105"/>
    </ligand>
</feature>
<feature type="binding site" evidence="1">
    <location>
        <position position="200"/>
    </location>
    <ligand>
        <name>Zn(2+)</name>
        <dbReference type="ChEBI" id="CHEBI:29105"/>
    </ligand>
</feature>
<gene>
    <name evidence="1" type="primary">queC</name>
    <name type="ordered locus">SMU_919c</name>
</gene>
<reference key="1">
    <citation type="journal article" date="2002" name="Proc. Natl. Acad. Sci. U.S.A.">
        <title>Genome sequence of Streptococcus mutans UA159, a cariogenic dental pathogen.</title>
        <authorList>
            <person name="Ajdic D.J."/>
            <person name="McShan W.M."/>
            <person name="McLaughlin R.E."/>
            <person name="Savic G."/>
            <person name="Chang J."/>
            <person name="Carson M.B."/>
            <person name="Primeaux C."/>
            <person name="Tian R."/>
            <person name="Kenton S."/>
            <person name="Jia H.G."/>
            <person name="Lin S.P."/>
            <person name="Qian Y."/>
            <person name="Li S."/>
            <person name="Zhu H."/>
            <person name="Najar F.Z."/>
            <person name="Lai H."/>
            <person name="White J."/>
            <person name="Roe B.A."/>
            <person name="Ferretti J.J."/>
        </authorList>
    </citation>
    <scope>NUCLEOTIDE SEQUENCE [LARGE SCALE GENOMIC DNA]</scope>
    <source>
        <strain>ATCC 700610 / UA159</strain>
    </source>
</reference>